<sequence length="934" mass="101234">MFYHGASANQHWIAVDDLSKVPVDVDHYNVVPFQFRRAGEYKEPVLSGIVELDEVKFVVSQSDAAEQWQQLTAEDGTVWRSRAYHGKLGKYSDMAVGAFNKVLNLVRGAETFDIALVTCAYIAMFYTLFNLFARMRAVGSKVWLGLSTLVSSFFAFLFALYITTRVLDLSIPFLSLSEGIPFFVAVVGFNNKILLAEKVLQNQLNAQSSKNDAPTVLYQALREQGPLLLRDHLFMITAFLGCSFYASYLDGLKNFCILAALILAFDILTTSTFLSAILSLKLEINQIHRSTLLREQLEDDGLTETTVDDVLKSNSLAGTKTFTDAPSTLVTVAKVAGVSVFFGLHFYGFGSAWLSDLSAGNETNDTFTLYDAVADQIPIGSNGTLVTLFPTRFFLPEKLSTQIEAVVLSFIGLISTAARDKYISKFILFAFAVSASINVYLLNVARIHTTRLEDAIELKKPKKKASKTAVSVPKAVVVKDSETTKSSEILHSSSESESEQSSRPLEQVIELYKDGKVKTLVDDEVVSLVTAGKLPLYALEKQLGDNLRAVAIRRKAISDLADAPVLRSNKLPYLHYDYDRVFGACCENVIGYMPLPVGVAGPLIIDGKPYHIPMATTEGCLVASAMRGCKAINLGGGVTTVLTKDGMTRGPCVKFPSLKRAGQCKLWLDSDEGQEEMKKAFNSTSRFARLQHLQTALAGDLLFIRFRTVTGDAMGMNMISKGVEYALKQMTEVFGWDDMMVVSVSGNYCTDKKPAAVNWINGRGKSVVAEASIPKDAVVKVLKSSVKAVVDVNVNKNLIGSAMAGSVGGFNAQAANMVTAVYLALGQDPAQNVESSNCITLMTETEDGDLKVSVSMPSIEVGTIGGGTILDPQGSMLELLGVRGPADVPGENARQLAKIVASIVLSGELSLVSALAAGHLVQSHMQHNRAAAKK</sequence>
<name>HMDH_CYBJA</name>
<gene>
    <name evidence="8" type="primary">HMG</name>
</gene>
<dbReference type="EC" id="1.1.1.34" evidence="7"/>
<dbReference type="EMBL" id="AB012603">
    <property type="protein sequence ID" value="BAA31937.1"/>
    <property type="molecule type" value="mRNA"/>
</dbReference>
<dbReference type="SMR" id="O74164"/>
<dbReference type="GlyCosmos" id="O74164">
    <property type="glycosylation" value="3 sites, No reported glycans"/>
</dbReference>
<dbReference type="UniPathway" id="UPA00058">
    <property type="reaction ID" value="UER00103"/>
</dbReference>
<dbReference type="GO" id="GO:0005789">
    <property type="term" value="C:endoplasmic reticulum membrane"/>
    <property type="evidence" value="ECO:0007669"/>
    <property type="project" value="UniProtKB-SubCell"/>
</dbReference>
<dbReference type="GO" id="GO:0005778">
    <property type="term" value="C:peroxisomal membrane"/>
    <property type="evidence" value="ECO:0007669"/>
    <property type="project" value="TreeGrafter"/>
</dbReference>
<dbReference type="GO" id="GO:0004420">
    <property type="term" value="F:hydroxymethylglutaryl-CoA reductase (NADPH) activity"/>
    <property type="evidence" value="ECO:0007669"/>
    <property type="project" value="UniProtKB-EC"/>
</dbReference>
<dbReference type="GO" id="GO:0015936">
    <property type="term" value="P:coenzyme A metabolic process"/>
    <property type="evidence" value="ECO:0007669"/>
    <property type="project" value="InterPro"/>
</dbReference>
<dbReference type="GO" id="GO:0006696">
    <property type="term" value="P:ergosterol biosynthetic process"/>
    <property type="evidence" value="ECO:0007669"/>
    <property type="project" value="TreeGrafter"/>
</dbReference>
<dbReference type="GO" id="GO:0008299">
    <property type="term" value="P:isoprenoid biosynthetic process"/>
    <property type="evidence" value="ECO:0007669"/>
    <property type="project" value="InterPro"/>
</dbReference>
<dbReference type="CDD" id="cd00643">
    <property type="entry name" value="HMG-CoA_reductase_classI"/>
    <property type="match status" value="1"/>
</dbReference>
<dbReference type="FunFam" id="1.10.3270.10:FF:000001">
    <property type="entry name" value="3-hydroxy-3-methylglutaryl coenzyme A reductase"/>
    <property type="match status" value="1"/>
</dbReference>
<dbReference type="FunFam" id="3.30.70.420:FF:000001">
    <property type="entry name" value="3-hydroxy-3-methylglutaryl coenzyme A reductase"/>
    <property type="match status" value="1"/>
</dbReference>
<dbReference type="FunFam" id="3.90.770.10:FF:000001">
    <property type="entry name" value="3-hydroxy-3-methylglutaryl coenzyme A reductase"/>
    <property type="match status" value="1"/>
</dbReference>
<dbReference type="Gene3D" id="3.90.770.10">
    <property type="entry name" value="3-hydroxy-3-methylglutaryl-coenzyme A Reductase, Chain A, domain 2"/>
    <property type="match status" value="1"/>
</dbReference>
<dbReference type="Gene3D" id="1.10.3270.10">
    <property type="entry name" value="HMGR, N-terminal domain"/>
    <property type="match status" value="1"/>
</dbReference>
<dbReference type="Gene3D" id="3.30.70.420">
    <property type="entry name" value="Hydroxymethylglutaryl-CoA reductase, class I/II, NAD/NADP-binding domain"/>
    <property type="match status" value="1"/>
</dbReference>
<dbReference type="InterPro" id="IPR002202">
    <property type="entry name" value="HMG_CoA_Rdtase"/>
</dbReference>
<dbReference type="InterPro" id="IPR023074">
    <property type="entry name" value="HMG_CoA_Rdtase_cat_sf"/>
</dbReference>
<dbReference type="InterPro" id="IPR023076">
    <property type="entry name" value="HMG_CoA_Rdtase_CS"/>
</dbReference>
<dbReference type="InterPro" id="IPR004554">
    <property type="entry name" value="HMG_CoA_Rdtase_eu_arc"/>
</dbReference>
<dbReference type="InterPro" id="IPR023282">
    <property type="entry name" value="HMG_CoA_Rdtase_N"/>
</dbReference>
<dbReference type="InterPro" id="IPR009023">
    <property type="entry name" value="HMG_CoA_Rdtase_NAD(P)-bd_sf"/>
</dbReference>
<dbReference type="InterPro" id="IPR009029">
    <property type="entry name" value="HMG_CoA_Rdtase_sub-bd_dom_sf"/>
</dbReference>
<dbReference type="InterPro" id="IPR053958">
    <property type="entry name" value="HMGCR/SNAP/NPC1-like_SSD"/>
</dbReference>
<dbReference type="InterPro" id="IPR000731">
    <property type="entry name" value="SSD"/>
</dbReference>
<dbReference type="NCBIfam" id="TIGR00533">
    <property type="entry name" value="HMG_CoA_R_NADP"/>
    <property type="match status" value="1"/>
</dbReference>
<dbReference type="PANTHER" id="PTHR10572">
    <property type="entry name" value="3-HYDROXY-3-METHYLGLUTARYL-COENZYME A REDUCTASE"/>
    <property type="match status" value="1"/>
</dbReference>
<dbReference type="PANTHER" id="PTHR10572:SF24">
    <property type="entry name" value="3-HYDROXY-3-METHYLGLUTARYL-COENZYME A REDUCTASE"/>
    <property type="match status" value="1"/>
</dbReference>
<dbReference type="Pfam" id="PF00368">
    <property type="entry name" value="HMG-CoA_red"/>
    <property type="match status" value="1"/>
</dbReference>
<dbReference type="Pfam" id="PF12349">
    <property type="entry name" value="Sterol-sensing"/>
    <property type="match status" value="1"/>
</dbReference>
<dbReference type="PRINTS" id="PR00071">
    <property type="entry name" value="HMGCOARDTASE"/>
</dbReference>
<dbReference type="SUPFAM" id="SSF55035">
    <property type="entry name" value="NAD-binding domain of HMG-CoA reductase"/>
    <property type="match status" value="1"/>
</dbReference>
<dbReference type="SUPFAM" id="SSF56542">
    <property type="entry name" value="Substrate-binding domain of HMG-CoA reductase"/>
    <property type="match status" value="1"/>
</dbReference>
<dbReference type="PROSITE" id="PS00066">
    <property type="entry name" value="HMG_COA_REDUCTASE_1"/>
    <property type="match status" value="1"/>
</dbReference>
<dbReference type="PROSITE" id="PS00318">
    <property type="entry name" value="HMG_COA_REDUCTASE_2"/>
    <property type="match status" value="1"/>
</dbReference>
<dbReference type="PROSITE" id="PS01192">
    <property type="entry name" value="HMG_COA_REDUCTASE_3"/>
    <property type="match status" value="1"/>
</dbReference>
<dbReference type="PROSITE" id="PS50065">
    <property type="entry name" value="HMG_COA_REDUCTASE_4"/>
    <property type="match status" value="1"/>
</dbReference>
<dbReference type="PROSITE" id="PS50156">
    <property type="entry name" value="SSD"/>
    <property type="match status" value="1"/>
</dbReference>
<keyword id="KW-0256">Endoplasmic reticulum</keyword>
<keyword id="KW-0325">Glycoprotein</keyword>
<keyword id="KW-0444">Lipid biosynthesis</keyword>
<keyword id="KW-0443">Lipid metabolism</keyword>
<keyword id="KW-0472">Membrane</keyword>
<keyword id="KW-0521">NADP</keyword>
<keyword id="KW-0560">Oxidoreductase</keyword>
<keyword id="KW-0752">Steroid biosynthesis</keyword>
<keyword id="KW-0753">Steroid metabolism</keyword>
<keyword id="KW-0756">Sterol biosynthesis</keyword>
<keyword id="KW-1207">Sterol metabolism</keyword>
<keyword id="KW-0812">Transmembrane</keyword>
<keyword id="KW-1133">Transmembrane helix</keyword>
<feature type="chain" id="PRO_0000114454" description="3-hydroxy-3-methylglutaryl-coenzyme A reductase">
    <location>
        <begin position="1"/>
        <end position="934"/>
    </location>
</feature>
<feature type="topological domain" description="Lumenal" evidence="2">
    <location>
        <begin position="1"/>
        <end position="111"/>
    </location>
</feature>
<feature type="transmembrane region" description="Helical" evidence="4">
    <location>
        <begin position="112"/>
        <end position="132"/>
    </location>
</feature>
<feature type="topological domain" description="Cytoplasmic" evidence="2">
    <location>
        <begin position="133"/>
        <end position="141"/>
    </location>
</feature>
<feature type="transmembrane region" description="Helical" evidence="4">
    <location>
        <begin position="142"/>
        <end position="162"/>
    </location>
</feature>
<feature type="topological domain" description="Lumenal" evidence="2">
    <location>
        <begin position="163"/>
        <end position="168"/>
    </location>
</feature>
<feature type="transmembrane region" description="Helical" evidence="4">
    <location>
        <begin position="169"/>
        <end position="189"/>
    </location>
</feature>
<feature type="topological domain" description="Cytoplasmic" evidence="2">
    <location>
        <begin position="190"/>
        <end position="231"/>
    </location>
</feature>
<feature type="transmembrane region" description="Helical" evidence="4">
    <location>
        <begin position="232"/>
        <end position="252"/>
    </location>
</feature>
<feature type="topological domain" description="Lumenal" evidence="2">
    <location>
        <begin position="253"/>
        <end position="256"/>
    </location>
</feature>
<feature type="transmembrane region" description="Helical" evidence="4">
    <location>
        <begin position="257"/>
        <end position="277"/>
    </location>
</feature>
<feature type="topological domain" description="Cytoplasmic" evidence="2">
    <location>
        <begin position="278"/>
        <end position="334"/>
    </location>
</feature>
<feature type="transmembrane region" description="Helical" evidence="4">
    <location>
        <begin position="335"/>
        <end position="355"/>
    </location>
</feature>
<feature type="topological domain" description="Lumenal" evidence="2">
    <location>
        <begin position="356"/>
        <end position="421"/>
    </location>
</feature>
<feature type="transmembrane region" description="Helical" evidence="4">
    <location>
        <begin position="422"/>
        <end position="442"/>
    </location>
</feature>
<feature type="topological domain" description="Cytoplasmic" evidence="2">
    <location>
        <begin position="443"/>
        <end position="934"/>
    </location>
</feature>
<feature type="domain" description="SSD" evidence="5">
    <location>
        <begin position="113"/>
        <end position="280"/>
    </location>
</feature>
<feature type="active site" description="Charge relay system" evidence="1">
    <location>
        <position position="618"/>
    </location>
</feature>
<feature type="active site" description="Charge relay system" evidence="1">
    <location>
        <position position="752"/>
    </location>
</feature>
<feature type="active site" description="Charge relay system" evidence="1">
    <location>
        <position position="828"/>
    </location>
</feature>
<feature type="active site" description="Proton donor" evidence="6">
    <location>
        <position position="924"/>
    </location>
</feature>
<feature type="binding site" evidence="1">
    <location>
        <begin position="624"/>
        <end position="630"/>
    </location>
    <ligand>
        <name>CoA</name>
        <dbReference type="ChEBI" id="CHEBI:57287"/>
    </ligand>
</feature>
<feature type="binding site" evidence="1">
    <location>
        <begin position="685"/>
        <end position="687"/>
    </location>
    <ligand>
        <name>NADP(+)</name>
        <dbReference type="ChEBI" id="CHEBI:58349"/>
    </ligand>
</feature>
<feature type="binding site" evidence="1">
    <location>
        <begin position="712"/>
        <end position="720"/>
    </location>
    <ligand>
        <name>NADP(+)</name>
        <dbReference type="ChEBI" id="CHEBI:58349"/>
    </ligand>
</feature>
<feature type="binding site" evidence="1">
    <location>
        <begin position="781"/>
        <end position="783"/>
    </location>
    <ligand>
        <name>CoA</name>
        <dbReference type="ChEBI" id="CHEBI:57287"/>
    </ligand>
</feature>
<feature type="binding site" evidence="1">
    <location>
        <begin position="923"/>
        <end position="924"/>
    </location>
    <ligand>
        <name>CoA</name>
        <dbReference type="ChEBI" id="CHEBI:57287"/>
    </ligand>
</feature>
<feature type="binding site" evidence="1">
    <location>
        <begin position="928"/>
        <end position="929"/>
    </location>
    <ligand>
        <name>NADP(+)</name>
        <dbReference type="ChEBI" id="CHEBI:58349"/>
    </ligand>
</feature>
<feature type="glycosylation site" description="N-linked (GlcNAc...) asparagine" evidence="4">
    <location>
        <position position="361"/>
    </location>
</feature>
<feature type="glycosylation site" description="N-linked (GlcNAc...) asparagine" evidence="4">
    <location>
        <position position="364"/>
    </location>
</feature>
<feature type="glycosylation site" description="N-linked (GlcNAc...) asparagine" evidence="4">
    <location>
        <position position="382"/>
    </location>
</feature>
<comment type="function">
    <text evidence="3 7">HMG-CoA reductase; part of the first module of ergosterol biosynthesis pathway that includes the early steps of the pathway, conserved across all eukaryotes, and which results in the formation of mevalonate from acetyl-coenzyme A (acetyl-CoA) (PubMed:9647847). In this module, the cytosolic acetyl-CoA acetyltransferase catalyzes the formation of acetoacetyl-CoA (By similarity). The hydroxymethylglutaryl-CoA synthase then condenses acetyl-CoA with acetoacetyl-CoA to form HMG-CoA (By similarity). The rate-limiting step of the early module is the reduction to mevalonate by the 3-hydroxy-3-methylglutaryl-coenzyme A (HMG-CoA) reductase (PubMed:9647847).</text>
</comment>
<comment type="catalytic activity">
    <reaction evidence="7">
        <text>(R)-mevalonate + 2 NADP(+) + CoA = (3S)-3-hydroxy-3-methylglutaryl-CoA + 2 NADPH + 2 H(+)</text>
        <dbReference type="Rhea" id="RHEA:15989"/>
        <dbReference type="ChEBI" id="CHEBI:15378"/>
        <dbReference type="ChEBI" id="CHEBI:36464"/>
        <dbReference type="ChEBI" id="CHEBI:43074"/>
        <dbReference type="ChEBI" id="CHEBI:57287"/>
        <dbReference type="ChEBI" id="CHEBI:57783"/>
        <dbReference type="ChEBI" id="CHEBI:58349"/>
        <dbReference type="EC" id="1.1.1.34"/>
    </reaction>
</comment>
<comment type="pathway">
    <text evidence="7">Metabolic intermediate biosynthesis; (R)-mevalonate biosynthesis; (R)-mevalonate from acetyl-CoA: step 3/3.</text>
</comment>
<comment type="subcellular location">
    <subcellularLocation>
        <location evidence="9">Endoplasmic reticulum membrane</location>
        <topology evidence="4">Multi-pass membrane protein</topology>
    </subcellularLocation>
</comment>
<comment type="similarity">
    <text evidence="9">Belongs to the HMG-CoA reductase family.</text>
</comment>
<reference key="1">
    <citation type="journal article" date="1998" name="Appl. Environ. Microbiol.">
        <title>Increased carotenoid production by the food yeast Candida utilis through metabolic engineering of the isoprenoid pathway.</title>
        <authorList>
            <person name="Shimada H."/>
            <person name="Kondo K."/>
            <person name="Fraser P.D."/>
            <person name="Miura Y."/>
            <person name="Saito T."/>
            <person name="Misawa N."/>
        </authorList>
    </citation>
    <scope>NUCLEOTIDE SEQUENCE [MRNA]</scope>
    <scope>FUNCTION</scope>
    <scope>CATALYTIC ACTIVITY</scope>
    <scope>PATHWAY</scope>
</reference>
<organism>
    <name type="scientific">Cyberlindnera jadinii</name>
    <name type="common">Torula yeast</name>
    <name type="synonym">Pichia jadinii</name>
    <dbReference type="NCBI Taxonomy" id="4903"/>
    <lineage>
        <taxon>Eukaryota</taxon>
        <taxon>Fungi</taxon>
        <taxon>Dikarya</taxon>
        <taxon>Ascomycota</taxon>
        <taxon>Saccharomycotina</taxon>
        <taxon>Saccharomycetes</taxon>
        <taxon>Phaffomycetales</taxon>
        <taxon>Phaffomycetaceae</taxon>
        <taxon>Cyberlindnera</taxon>
    </lineage>
</organism>
<evidence type="ECO:0000250" key="1">
    <source>
        <dbReference type="UniProtKB" id="P04035"/>
    </source>
</evidence>
<evidence type="ECO:0000250" key="2">
    <source>
        <dbReference type="UniProtKB" id="P12684"/>
    </source>
</evidence>
<evidence type="ECO:0000250" key="3">
    <source>
        <dbReference type="UniProtKB" id="Q4WHZ1"/>
    </source>
</evidence>
<evidence type="ECO:0000255" key="4"/>
<evidence type="ECO:0000255" key="5">
    <source>
        <dbReference type="PROSITE-ProRule" id="PRU00199"/>
    </source>
</evidence>
<evidence type="ECO:0000255" key="6">
    <source>
        <dbReference type="PROSITE-ProRule" id="PRU10003"/>
    </source>
</evidence>
<evidence type="ECO:0000269" key="7">
    <source>
    </source>
</evidence>
<evidence type="ECO:0000303" key="8">
    <source>
    </source>
</evidence>
<evidence type="ECO:0000305" key="9"/>
<proteinExistence type="evidence at protein level"/>
<protein>
    <recommendedName>
        <fullName evidence="8">3-hydroxy-3-methylglutaryl-coenzyme A reductase</fullName>
        <shortName evidence="8">HMG-CoA reductase</shortName>
        <ecNumber evidence="7">1.1.1.34</ecNumber>
    </recommendedName>
</protein>
<accession>O74164</accession>